<proteinExistence type="evidence at protein level"/>
<keyword id="KW-0027">Amidation</keyword>
<keyword id="KW-0903">Direct protein sequencing</keyword>
<keyword id="KW-1015">Disulfide bond</keyword>
<keyword id="KW-0873">Pyrrolidone carboxylic acid</keyword>
<keyword id="KW-0964">Secreted</keyword>
<keyword id="KW-0800">Toxin</keyword>
<organism evidence="3">
    <name type="scientific">Conus araneosus</name>
    <name type="common">Cobweb cone</name>
    <dbReference type="NCBI Taxonomy" id="101286"/>
    <lineage>
        <taxon>Eukaryota</taxon>
        <taxon>Metazoa</taxon>
        <taxon>Spiralia</taxon>
        <taxon>Lophotrochozoa</taxon>
        <taxon>Mollusca</taxon>
        <taxon>Gastropoda</taxon>
        <taxon>Caenogastropoda</taxon>
        <taxon>Neogastropoda</taxon>
        <taxon>Conoidea</taxon>
        <taxon>Conidae</taxon>
        <taxon>Conus</taxon>
    </lineage>
</organism>
<sequence length="16" mass="1738">ECCTHAHCSQGCRPCC</sequence>
<feature type="peptide" id="PRO_0000445628" description="Conotoxin ar3g" evidence="2">
    <location>
        <begin position="1"/>
        <end position="16"/>
    </location>
</feature>
<feature type="modified residue" description="Pyrrolidone carboxylic acid (Glu); in form conotoxin ar3h" evidence="2">
    <location>
        <position position="1"/>
    </location>
</feature>
<feature type="modified residue" description="Cysteine amide" evidence="2">
    <location>
        <position position="16"/>
    </location>
</feature>
<feature type="disulfide bond" evidence="1">
    <location>
        <begin position="2"/>
        <end position="16"/>
    </location>
</feature>
<feature type="disulfide bond" evidence="1">
    <location>
        <begin position="3"/>
        <end position="12"/>
    </location>
</feature>
<feature type="disulfide bond" evidence="1">
    <location>
        <begin position="8"/>
        <end position="15"/>
    </location>
</feature>
<name>CM3G_CONAO</name>
<evidence type="ECO:0000250" key="1">
    <source>
        <dbReference type="UniProtKB" id="P0C1M9"/>
    </source>
</evidence>
<evidence type="ECO:0000269" key="2">
    <source>
    </source>
</evidence>
<evidence type="ECO:0000303" key="3">
    <source>
    </source>
</evidence>
<evidence type="ECO:0000305" key="4"/>
<evidence type="ECO:0000305" key="5">
    <source>
    </source>
</evidence>
<dbReference type="GO" id="GO:0005576">
    <property type="term" value="C:extracellular region"/>
    <property type="evidence" value="ECO:0000314"/>
    <property type="project" value="UniProtKB"/>
</dbReference>
<dbReference type="GO" id="GO:0090729">
    <property type="term" value="F:toxin activity"/>
    <property type="evidence" value="ECO:0007669"/>
    <property type="project" value="UniProtKB-KW"/>
</dbReference>
<reference evidence="4" key="1">
    <citation type="journal article" date="2015" name="Toxicon">
        <title>A sleep-inducing peptide from the venom of the Indian cone snail Conus araneosus.</title>
        <authorList>
            <person name="Franklin J.B."/>
            <person name="Rajesh R.P."/>
        </authorList>
    </citation>
    <scope>PROTEIN SEQUENCE</scope>
    <scope>SUBCELLULAR LOCATION</scope>
    <scope>MASS SPECTROMETRY</scope>
    <scope>IDENTIFICATION BY MASS SPECTROMETRY</scope>
    <scope>AMIDATION AT CYS-16</scope>
    <scope>PYROGLUTAMATE FORMATION AT GLU-1</scope>
    <source>
        <tissue evidence="3">Venom</tissue>
    </source>
</reference>
<protein>
    <recommendedName>
        <fullName evidence="3">Conotoxin ar3g</fullName>
    </recommendedName>
    <alternativeName>
        <fullName evidence="3">Conotoxin ar3h</fullName>
    </alternativeName>
</protein>
<accession>C0HKZ1</accession>
<accession>C0HKZ2</accession>
<comment type="subcellular location">
    <subcellularLocation>
        <location evidence="2">Secreted</location>
    </subcellularLocation>
</comment>
<comment type="tissue specificity">
    <text evidence="5">Expressed by the venom duct.</text>
</comment>
<comment type="domain">
    <text evidence="3">The cysteine framework is III (CC-C-C-CC). Classified in the M-2 branch, since 2 residues stand between the fourth and the fifth cysteine residues.</text>
</comment>
<comment type="mass spectrometry" mass="1729.5" method="MALDI" evidence="2">
    <text>Form conotoxin ar3g.</text>
</comment>
<comment type="mass spectrometry" mass="1711.5" method="MALDI" evidence="2">
    <text>Pyroglutamate-containing form conotoxin ar3h.</text>
</comment>
<comment type="similarity">
    <text evidence="4">Belongs to the conotoxin M superfamily.</text>
</comment>